<organismHost>
    <name type="scientific">Acanthamoeba polyphaga</name>
    <name type="common">Amoeba</name>
    <dbReference type="NCBI Taxonomy" id="5757"/>
</organismHost>
<gene>
    <name type="ordered locus">MIMI_R546</name>
</gene>
<proteinExistence type="inferred from homology"/>
<feature type="chain" id="PRO_0000071290" description="Uncharacterized protein R546">
    <location>
        <begin position="1"/>
        <end position="213"/>
    </location>
</feature>
<feature type="region of interest" description="Disordered" evidence="2">
    <location>
        <begin position="122"/>
        <end position="213"/>
    </location>
</feature>
<feature type="coiled-coil region" evidence="1">
    <location>
        <begin position="54"/>
        <end position="78"/>
    </location>
</feature>
<feature type="coiled-coil region" evidence="1">
    <location>
        <begin position="108"/>
        <end position="151"/>
    </location>
</feature>
<feature type="compositionally biased region" description="Basic and acidic residues" evidence="2">
    <location>
        <begin position="122"/>
        <end position="142"/>
    </location>
</feature>
<feature type="compositionally biased region" description="Low complexity" evidence="2">
    <location>
        <begin position="146"/>
        <end position="188"/>
    </location>
</feature>
<feature type="compositionally biased region" description="Basic residues" evidence="2">
    <location>
        <begin position="189"/>
        <end position="199"/>
    </location>
</feature>
<protein>
    <recommendedName>
        <fullName>Uncharacterized protein R546</fullName>
    </recommendedName>
</protein>
<sequence>MSDMYCGIGKIPKGKERGTPEYCVQSNQVRYYGLKKIDRSLLETAKVKKTSLVKEQTKLNNLIEKGKQMLKEYNNLKLIINDEKSSKSAVNKARKRMEEIVLRKDRFVKDVKKQREIVNDLIEKEKEEEKAAKKAEKAEEKKKQSKNSTSKSGSKSSKSSSGSSKSSSKSSKSSKSSSGSSKSSSKSSKNSKKSSKKSNFRTQFGGKPTGQIW</sequence>
<reference key="1">
    <citation type="journal article" date="2004" name="Science">
        <title>The 1.2-megabase genome sequence of Mimivirus.</title>
        <authorList>
            <person name="Raoult D."/>
            <person name="Audic S."/>
            <person name="Robert C."/>
            <person name="Abergel C."/>
            <person name="Renesto P."/>
            <person name="Ogata H."/>
            <person name="La Scola B."/>
            <person name="Susan M."/>
            <person name="Claverie J.-M."/>
        </authorList>
    </citation>
    <scope>NUCLEOTIDE SEQUENCE [LARGE SCALE GENOMIC DNA]</scope>
    <source>
        <strain>Rowbotham-Bradford</strain>
    </source>
</reference>
<evidence type="ECO:0000255" key="1"/>
<evidence type="ECO:0000256" key="2">
    <source>
        <dbReference type="SAM" id="MobiDB-lite"/>
    </source>
</evidence>
<evidence type="ECO:0000305" key="3"/>
<dbReference type="EMBL" id="AY653733">
    <property type="protein sequence ID" value="AAV50810.1"/>
    <property type="molecule type" value="Genomic_DNA"/>
</dbReference>
<dbReference type="SMR" id="Q5UR26"/>
<dbReference type="KEGG" id="vg:9925180"/>
<dbReference type="OrthoDB" id="25528at10239"/>
<dbReference type="Proteomes" id="UP000001134">
    <property type="component" value="Genome"/>
</dbReference>
<accession>Q5UR26</accession>
<organism>
    <name type="scientific">Acanthamoeba polyphaga mimivirus</name>
    <name type="common">APMV</name>
    <dbReference type="NCBI Taxonomy" id="212035"/>
    <lineage>
        <taxon>Viruses</taxon>
        <taxon>Varidnaviria</taxon>
        <taxon>Bamfordvirae</taxon>
        <taxon>Nucleocytoviricota</taxon>
        <taxon>Megaviricetes</taxon>
        <taxon>Imitervirales</taxon>
        <taxon>Mimiviridae</taxon>
        <taxon>Megamimivirinae</taxon>
        <taxon>Mimivirus</taxon>
        <taxon>Mimivirus bradfordmassiliense</taxon>
    </lineage>
</organism>
<keyword id="KW-0175">Coiled coil</keyword>
<keyword id="KW-1185">Reference proteome</keyword>
<name>VF546_MIMIV</name>
<comment type="similarity">
    <text evidence="3">Belongs to the mimivirus R546 family.</text>
</comment>